<organism>
    <name type="scientific">Acanthamoeba polyphaga mimivirus</name>
    <name type="common">APMV</name>
    <dbReference type="NCBI Taxonomy" id="212035"/>
    <lineage>
        <taxon>Viruses</taxon>
        <taxon>Varidnaviria</taxon>
        <taxon>Bamfordvirae</taxon>
        <taxon>Nucleocytoviricota</taxon>
        <taxon>Megaviricetes</taxon>
        <taxon>Imitervirales</taxon>
        <taxon>Mimiviridae</taxon>
        <taxon>Megamimivirinae</taxon>
        <taxon>Mimivirus</taxon>
        <taxon>Mimivirus bradfordmassiliense</taxon>
    </lineage>
</organism>
<keyword id="KW-0002">3D-structure</keyword>
<keyword id="KW-0479">Metal-binding</keyword>
<keyword id="KW-1185">Reference proteome</keyword>
<keyword id="KW-0862">Zinc</keyword>
<keyword id="KW-0863">Zinc-finger</keyword>
<name>YL720_MIMIV</name>
<accession>Q5UNW7</accession>
<dbReference type="EMBL" id="AY653733">
    <property type="protein sequence ID" value="AAV50980.1"/>
    <property type="status" value="ALT_INIT"/>
    <property type="molecule type" value="Genomic_DNA"/>
</dbReference>
<dbReference type="PDB" id="4MB7">
    <property type="method" value="X-ray"/>
    <property type="resolution" value="2.04 A"/>
    <property type="chains" value="A=2-274"/>
</dbReference>
<dbReference type="PDBsum" id="4MB7"/>
<dbReference type="SMR" id="Q5UNW7"/>
<dbReference type="KEGG" id="vg:9925374"/>
<dbReference type="OrthoDB" id="10408at10239"/>
<dbReference type="EvolutionaryTrace" id="Q5UNW7"/>
<dbReference type="Proteomes" id="UP000001134">
    <property type="component" value="Genome"/>
</dbReference>
<dbReference type="GO" id="GO:0003684">
    <property type="term" value="F:damaged DNA binding"/>
    <property type="evidence" value="ECO:0007669"/>
    <property type="project" value="InterPro"/>
</dbReference>
<dbReference type="GO" id="GO:0019104">
    <property type="term" value="F:DNA N-glycosylase activity"/>
    <property type="evidence" value="ECO:0007669"/>
    <property type="project" value="TreeGrafter"/>
</dbReference>
<dbReference type="GO" id="GO:0003906">
    <property type="term" value="F:DNA-(apurinic or apyrimidinic site) endonuclease activity"/>
    <property type="evidence" value="ECO:0007669"/>
    <property type="project" value="InterPro"/>
</dbReference>
<dbReference type="GO" id="GO:0008270">
    <property type="term" value="F:zinc ion binding"/>
    <property type="evidence" value="ECO:0007669"/>
    <property type="project" value="UniProtKB-KW"/>
</dbReference>
<dbReference type="GO" id="GO:0006284">
    <property type="term" value="P:base-excision repair"/>
    <property type="evidence" value="ECO:0007669"/>
    <property type="project" value="InterPro"/>
</dbReference>
<dbReference type="CDD" id="cd08773">
    <property type="entry name" value="FpgNei_N"/>
    <property type="match status" value="1"/>
</dbReference>
<dbReference type="Gene3D" id="1.10.8.50">
    <property type="match status" value="1"/>
</dbReference>
<dbReference type="Gene3D" id="3.20.190.10">
    <property type="entry name" value="MutM-like, N-terminal"/>
    <property type="match status" value="1"/>
</dbReference>
<dbReference type="InterPro" id="IPR015886">
    <property type="entry name" value="DNA_glyclase/AP_lyase_DNA-bd"/>
</dbReference>
<dbReference type="InterPro" id="IPR035937">
    <property type="entry name" value="MutM-like_N-ter"/>
</dbReference>
<dbReference type="InterPro" id="IPR010979">
    <property type="entry name" value="Ribosomal_uS13-like_H2TH"/>
</dbReference>
<dbReference type="PANTHER" id="PTHR22993">
    <property type="entry name" value="FORMAMIDOPYRIMIDINE-DNA GLYCOSYLASE"/>
    <property type="match status" value="1"/>
</dbReference>
<dbReference type="PANTHER" id="PTHR22993:SF9">
    <property type="entry name" value="FORMAMIDOPYRIMIDINE-DNA GLYCOSYLASE"/>
    <property type="match status" value="1"/>
</dbReference>
<dbReference type="Pfam" id="PF06831">
    <property type="entry name" value="H2TH"/>
    <property type="match status" value="1"/>
</dbReference>
<dbReference type="SMART" id="SM01232">
    <property type="entry name" value="H2TH"/>
    <property type="match status" value="1"/>
</dbReference>
<dbReference type="SUPFAM" id="SSF81624">
    <property type="entry name" value="N-terminal domain of MutM-like DNA repair proteins"/>
    <property type="match status" value="1"/>
</dbReference>
<dbReference type="SUPFAM" id="SSF46946">
    <property type="entry name" value="S13-like H2TH domain"/>
    <property type="match status" value="1"/>
</dbReference>
<proteinExistence type="evidence at protein level"/>
<protein>
    <recommendedName>
        <fullName>Endonuclease 8-like L720</fullName>
    </recommendedName>
    <alternativeName>
        <fullName>Endonuclease VIII-like L720</fullName>
    </alternativeName>
</protein>
<organismHost>
    <name type="scientific">Acanthamoeba polyphaga</name>
    <name type="common">Amoeba</name>
    <dbReference type="NCBI Taxonomy" id="5757"/>
</organismHost>
<comment type="similarity">
    <text evidence="1">Belongs to the FPG family.</text>
</comment>
<comment type="sequence caution" evidence="1">
    <conflict type="erroneous initiation">
        <sequence resource="EMBL-CDS" id="AAV50980"/>
    </conflict>
</comment>
<evidence type="ECO:0000305" key="1"/>
<evidence type="ECO:0007829" key="2">
    <source>
        <dbReference type="PDB" id="4MB7"/>
    </source>
</evidence>
<sequence>MVEAPRIRITYEKIRHTKNHRIVSISGPSYKRMNVDLIDYIIRKWWFAGKYIYLMLISSNKPTYVIRTHMMMHGRILVGNQDSPTKRAFMIIQLDNDIVLRWYRSQITLLDPNCLAEIKTNYTICTTRQAIMDSIKLMKYDLSNNRFDYNLFQSHLKNGINIHSSEIITDFLLDQEYFPGVGNILQQEALYDCKILPLKKVQDIDEPMFDCLCNSLKKIIDLLYESYKFRESGKEFGPILRIYRKSLCPLGHKTIRKKIGLRNRMTTWCPVCQL</sequence>
<reference key="1">
    <citation type="journal article" date="2004" name="Science">
        <title>The 1.2-megabase genome sequence of Mimivirus.</title>
        <authorList>
            <person name="Raoult D."/>
            <person name="Audic S."/>
            <person name="Robert C."/>
            <person name="Abergel C."/>
            <person name="Renesto P."/>
            <person name="Ogata H."/>
            <person name="La Scola B."/>
            <person name="Susan M."/>
            <person name="Claverie J.-M."/>
        </authorList>
    </citation>
    <scope>NUCLEOTIDE SEQUENCE [LARGE SCALE GENOMIC DNA]</scope>
    <source>
        <strain>Rowbotham-Bradford</strain>
    </source>
</reference>
<gene>
    <name type="ordered locus">MIMI_L720</name>
</gene>
<feature type="chain" id="PRO_0000248636" description="Endonuclease 8-like L720">
    <location>
        <begin position="1"/>
        <end position="274"/>
    </location>
</feature>
<feature type="zinc finger region" description="FPG-type; degenerate">
    <location>
        <begin position="241"/>
        <end position="274"/>
    </location>
</feature>
<feature type="helix" evidence="2">
    <location>
        <begin position="6"/>
        <end position="14"/>
    </location>
</feature>
<feature type="helix" evidence="2">
    <location>
        <begin position="15"/>
        <end position="17"/>
    </location>
</feature>
<feature type="strand" evidence="2">
    <location>
        <begin position="21"/>
        <end position="27"/>
    </location>
</feature>
<feature type="helix" evidence="2">
    <location>
        <begin position="28"/>
        <end position="33"/>
    </location>
</feature>
<feature type="strand" evidence="2">
    <location>
        <begin position="41"/>
        <end position="48"/>
    </location>
</feature>
<feature type="strand" evidence="2">
    <location>
        <begin position="51"/>
        <end position="57"/>
    </location>
</feature>
<feature type="strand" evidence="2">
    <location>
        <begin position="64"/>
        <end position="79"/>
    </location>
</feature>
<feature type="strand" evidence="2">
    <location>
        <begin position="89"/>
        <end position="94"/>
    </location>
</feature>
<feature type="strand" evidence="2">
    <location>
        <begin position="99"/>
        <end position="110"/>
    </location>
</feature>
<feature type="strand" evidence="2">
    <location>
        <begin position="117"/>
        <end position="119"/>
    </location>
</feature>
<feature type="strand" evidence="2">
    <location>
        <begin position="124"/>
        <end position="126"/>
    </location>
</feature>
<feature type="helix" evidence="2">
    <location>
        <begin position="127"/>
        <end position="137"/>
    </location>
</feature>
<feature type="helix" evidence="2">
    <location>
        <begin position="138"/>
        <end position="140"/>
    </location>
</feature>
<feature type="helix" evidence="2">
    <location>
        <begin position="149"/>
        <end position="162"/>
    </location>
</feature>
<feature type="turn" evidence="2">
    <location>
        <begin position="163"/>
        <end position="165"/>
    </location>
</feature>
<feature type="helix" evidence="2">
    <location>
        <begin position="168"/>
        <end position="172"/>
    </location>
</feature>
<feature type="turn" evidence="2">
    <location>
        <begin position="175"/>
        <end position="177"/>
    </location>
</feature>
<feature type="helix" evidence="2">
    <location>
        <begin position="183"/>
        <end position="192"/>
    </location>
</feature>
<feature type="helix" evidence="2">
    <location>
        <begin position="201"/>
        <end position="203"/>
    </location>
</feature>
<feature type="helix" evidence="2">
    <location>
        <begin position="206"/>
        <end position="231"/>
    </location>
</feature>
<feature type="strand" evidence="2">
    <location>
        <begin position="255"/>
        <end position="259"/>
    </location>
</feature>
<feature type="turn" evidence="2">
    <location>
        <begin position="260"/>
        <end position="263"/>
    </location>
</feature>
<feature type="strand" evidence="2">
    <location>
        <begin position="264"/>
        <end position="268"/>
    </location>
</feature>
<feature type="turn" evidence="2">
    <location>
        <begin position="270"/>
        <end position="272"/>
    </location>
</feature>